<sequence length="97" mass="11198">MLIKQFSRRPKNMKVQILLAFAALFVLAVGSYASESKKLDLRDASFSAMFSADYQLNPQERGCRYFLGECKKTSECCEHLACHDKHKWCAWDWTIGK</sequence>
<proteinExistence type="evidence at transcript level"/>
<protein>
    <recommendedName>
        <fullName>U6-theraphotoxin-Hhn1a 2</fullName>
        <shortName>U6-TRTX-Hhn1a</shortName>
    </recommendedName>
    <alternativeName>
        <fullName evidence="4">Hainantoxin-XII.2</fullName>
        <shortName evidence="4">HNTX-XII.2</shortName>
    </alternativeName>
</protein>
<feature type="signal peptide" evidence="2">
    <location>
        <begin position="1"/>
        <end position="33"/>
    </location>
</feature>
<feature type="propeptide" id="PRO_0000400673" evidence="1">
    <location>
        <begin position="34"/>
        <end position="61"/>
    </location>
</feature>
<feature type="peptide" id="PRO_0000400674" description="U6-theraphotoxin-Hhn1a 2">
    <location>
        <begin position="62"/>
        <end position="97"/>
    </location>
</feature>
<feature type="disulfide bond" evidence="1">
    <location>
        <begin position="63"/>
        <end position="77"/>
    </location>
</feature>
<feature type="disulfide bond" evidence="1">
    <location>
        <begin position="70"/>
        <end position="82"/>
    </location>
</feature>
<feature type="disulfide bond" evidence="1">
    <location>
        <begin position="76"/>
        <end position="89"/>
    </location>
</feature>
<comment type="function">
    <text evidence="1">Ion channel inhibitor.</text>
</comment>
<comment type="subcellular location">
    <subcellularLocation>
        <location evidence="1">Secreted</location>
    </subcellularLocation>
</comment>
<comment type="tissue specificity">
    <text>Expressed by the venom gland.</text>
</comment>
<comment type="domain">
    <text evidence="1">The presence of a 'disulfide through disulfide knot' structurally defines this protein as a knottin.</text>
</comment>
<comment type="similarity">
    <text evidence="3">Belongs to the neurotoxin 10 (Hwtx-1) family. 12 (Hntx-12) subfamily.</text>
</comment>
<dbReference type="EMBL" id="GU293053">
    <property type="protein sequence ID" value="ADB56869.1"/>
    <property type="molecule type" value="mRNA"/>
</dbReference>
<dbReference type="SMR" id="D2Y2H6"/>
<dbReference type="ArachnoServer" id="AS001585">
    <property type="toxin name" value="U6-theraphotoxin-Hhn1a"/>
</dbReference>
<dbReference type="GO" id="GO:0005576">
    <property type="term" value="C:extracellular region"/>
    <property type="evidence" value="ECO:0007669"/>
    <property type="project" value="UniProtKB-SubCell"/>
</dbReference>
<dbReference type="GO" id="GO:0008200">
    <property type="term" value="F:ion channel inhibitor activity"/>
    <property type="evidence" value="ECO:0007669"/>
    <property type="project" value="InterPro"/>
</dbReference>
<dbReference type="GO" id="GO:0090729">
    <property type="term" value="F:toxin activity"/>
    <property type="evidence" value="ECO:0007669"/>
    <property type="project" value="UniProtKB-KW"/>
</dbReference>
<dbReference type="InterPro" id="IPR011696">
    <property type="entry name" value="Huwentoxin-1"/>
</dbReference>
<dbReference type="InterPro" id="IPR013140">
    <property type="entry name" value="Huwentoxin_CS1"/>
</dbReference>
<dbReference type="Pfam" id="PF07740">
    <property type="entry name" value="Toxin_12"/>
    <property type="match status" value="1"/>
</dbReference>
<dbReference type="SUPFAM" id="SSF57059">
    <property type="entry name" value="omega toxin-like"/>
    <property type="match status" value="1"/>
</dbReference>
<dbReference type="PROSITE" id="PS60021">
    <property type="entry name" value="HWTX_1"/>
    <property type="match status" value="1"/>
</dbReference>
<name>H12A2_CYRHA</name>
<accession>D2Y2H6</accession>
<reference key="1">
    <citation type="journal article" date="2010" name="J. Proteome Res.">
        <title>Molecular diversification of peptide toxins from the tarantula Haplopelma hainanum (Ornithoctonus hainana) venom based on transcriptomic, peptidomic, and genomic analyses.</title>
        <authorList>
            <person name="Tang X."/>
            <person name="Zhang Y."/>
            <person name="Hu W."/>
            <person name="Xu D."/>
            <person name="Tao H."/>
            <person name="Yang X."/>
            <person name="Li Y."/>
            <person name="Jiang L."/>
            <person name="Liang S."/>
        </authorList>
    </citation>
    <scope>NUCLEOTIDE SEQUENCE [LARGE SCALE MRNA]</scope>
    <source>
        <tissue>Venom gland</tissue>
    </source>
</reference>
<keyword id="KW-1015">Disulfide bond</keyword>
<keyword id="KW-0872">Ion channel impairing toxin</keyword>
<keyword id="KW-0960">Knottin</keyword>
<keyword id="KW-0964">Secreted</keyword>
<keyword id="KW-0732">Signal</keyword>
<keyword id="KW-0800">Toxin</keyword>
<evidence type="ECO:0000250" key="1"/>
<evidence type="ECO:0000255" key="2"/>
<evidence type="ECO:0000305" key="3"/>
<evidence type="ECO:0000312" key="4">
    <source>
        <dbReference type="EMBL" id="ADB56869.1"/>
    </source>
</evidence>
<organism>
    <name type="scientific">Cyriopagopus hainanus</name>
    <name type="common">Chinese bird spider</name>
    <name type="synonym">Haplopelma hainanum</name>
    <dbReference type="NCBI Taxonomy" id="209901"/>
    <lineage>
        <taxon>Eukaryota</taxon>
        <taxon>Metazoa</taxon>
        <taxon>Ecdysozoa</taxon>
        <taxon>Arthropoda</taxon>
        <taxon>Chelicerata</taxon>
        <taxon>Arachnida</taxon>
        <taxon>Araneae</taxon>
        <taxon>Mygalomorphae</taxon>
        <taxon>Theraphosidae</taxon>
        <taxon>Haplopelma</taxon>
    </lineage>
</organism>